<evidence type="ECO:0000255" key="1"/>
<evidence type="ECO:0000269" key="2">
    <source>
    </source>
</evidence>
<evidence type="ECO:0000269" key="3">
    <source>
    </source>
</evidence>
<evidence type="ECO:0000303" key="4">
    <source>
    </source>
</evidence>
<evidence type="ECO:0000303" key="5">
    <source>
    </source>
</evidence>
<evidence type="ECO:0000305" key="6"/>
<evidence type="ECO:0000312" key="7">
    <source>
        <dbReference type="EMBL" id="AAS55948.1"/>
    </source>
</evidence>
<evidence type="ECO:0000312" key="8">
    <source>
        <dbReference type="EMBL" id="JAV99089.1"/>
    </source>
</evidence>
<evidence type="ECO:0007744" key="9">
    <source>
        <dbReference type="PDB" id="3L0R"/>
    </source>
</evidence>
<evidence type="ECO:0007829" key="10">
    <source>
        <dbReference type="PDB" id="3L0R"/>
    </source>
</evidence>
<protein>
    <recommendedName>
        <fullName evidence="4">Cystatin-2</fullName>
    </recommendedName>
    <alternativeName>
        <fullName evidence="5">Cystatin OmC2</fullName>
    </alternativeName>
</protein>
<dbReference type="EMBL" id="AY547735">
    <property type="protein sequence ID" value="AAS55948.1"/>
    <property type="molecule type" value="mRNA"/>
</dbReference>
<dbReference type="EMBL" id="GFJQ02004411">
    <property type="protein sequence ID" value="JAW02559.1"/>
    <property type="molecule type" value="Transcribed_RNA"/>
</dbReference>
<dbReference type="EMBL" id="GFJQ02007880">
    <property type="protein sequence ID" value="JAV99089.1"/>
    <property type="molecule type" value="Transcribed_RNA"/>
</dbReference>
<dbReference type="PDB" id="3L0R">
    <property type="method" value="X-ray"/>
    <property type="resolution" value="2.45 A"/>
    <property type="chains" value="A/B=20-128"/>
</dbReference>
<dbReference type="PDBsum" id="3L0R"/>
<dbReference type="SMR" id="Q6QD55"/>
<dbReference type="MEROPS" id="I25.049"/>
<dbReference type="EvolutionaryTrace" id="Q6QD55"/>
<dbReference type="GO" id="GO:0005737">
    <property type="term" value="C:cytoplasm"/>
    <property type="evidence" value="ECO:0007669"/>
    <property type="project" value="TreeGrafter"/>
</dbReference>
<dbReference type="GO" id="GO:0005615">
    <property type="term" value="C:extracellular space"/>
    <property type="evidence" value="ECO:0007669"/>
    <property type="project" value="TreeGrafter"/>
</dbReference>
<dbReference type="GO" id="GO:0031982">
    <property type="term" value="C:vesicle"/>
    <property type="evidence" value="ECO:0007669"/>
    <property type="project" value="TreeGrafter"/>
</dbReference>
<dbReference type="GO" id="GO:0004869">
    <property type="term" value="F:cysteine-type endopeptidase inhibitor activity"/>
    <property type="evidence" value="ECO:0007669"/>
    <property type="project" value="UniProtKB-KW"/>
</dbReference>
<dbReference type="CDD" id="cd00042">
    <property type="entry name" value="CY"/>
    <property type="match status" value="1"/>
</dbReference>
<dbReference type="Gene3D" id="3.10.450.10">
    <property type="match status" value="1"/>
</dbReference>
<dbReference type="InterPro" id="IPR000010">
    <property type="entry name" value="Cystatin_dom"/>
</dbReference>
<dbReference type="InterPro" id="IPR046350">
    <property type="entry name" value="Cystatin_sf"/>
</dbReference>
<dbReference type="InterPro" id="IPR018073">
    <property type="entry name" value="Prot_inh_cystat_CS"/>
</dbReference>
<dbReference type="PANTHER" id="PTHR46186">
    <property type="entry name" value="CYSTATIN"/>
    <property type="match status" value="1"/>
</dbReference>
<dbReference type="PANTHER" id="PTHR46186:SF2">
    <property type="entry name" value="CYSTATIN"/>
    <property type="match status" value="1"/>
</dbReference>
<dbReference type="Pfam" id="PF00031">
    <property type="entry name" value="Cystatin"/>
    <property type="match status" value="1"/>
</dbReference>
<dbReference type="SMART" id="SM00043">
    <property type="entry name" value="CY"/>
    <property type="match status" value="1"/>
</dbReference>
<dbReference type="SUPFAM" id="SSF54403">
    <property type="entry name" value="Cystatin/monellin"/>
    <property type="match status" value="1"/>
</dbReference>
<dbReference type="PROSITE" id="PS00287">
    <property type="entry name" value="CYSTATIN"/>
    <property type="match status" value="1"/>
</dbReference>
<name>CYS2_ORNMO</name>
<reference evidence="7" key="1">
    <citation type="journal article" date="2006" name="Biol. Chem.">
        <title>Two secreted cystatins of the soft tick Ornithodoros moubata: differential expression pattern and inhibitory specificity.</title>
        <authorList>
            <person name="Grunclova L."/>
            <person name="Horn M."/>
            <person name="Vancova M."/>
            <person name="Sojka D."/>
            <person name="Franta Z."/>
            <person name="Mares M."/>
            <person name="Kopacek P."/>
        </authorList>
    </citation>
    <scope>NUCLEOTIDE SEQUENCE [MRNA]</scope>
    <scope>FUNCTION</scope>
    <scope>INDUCTION</scope>
    <scope>TISSUE SPECIFICITY</scope>
    <scope>RECOMBINANT EXPRESSION</scope>
    <source>
        <tissue>Gut</tissue>
    </source>
</reference>
<reference evidence="8" key="2">
    <citation type="journal article" date="2017" name="Ticks Tick Borne Dis.">
        <title>Functional annotation and analysis of the Ornithodoros moubata midgut genes differentially expressed after blood feeding.</title>
        <authorList>
            <person name="Oleaga A."/>
            <person name="Obolo-Mvoulouga P."/>
            <person name="Manzano-Roman R."/>
            <person name="Perez-Sanchez R."/>
        </authorList>
    </citation>
    <scope>NUCLEOTIDE SEQUENCE [LARGE SCALE MRNA]</scope>
    <source>
        <tissue>Gut</tissue>
    </source>
</reference>
<reference evidence="9" key="3">
    <citation type="journal article" date="2010" name="Biochem. J.">
        <title>Crystal structure and functional characterization of an immunomodulatory salivary cystatin from the soft tick Ornithodoros moubata.</title>
        <authorList>
            <person name="Salat J."/>
            <person name="Paesen G.C."/>
            <person name="Rezacova P."/>
            <person name="Kotsyfakis M."/>
            <person name="Kovarova Z."/>
            <person name="Sanda M."/>
            <person name="Majtan J."/>
            <person name="Grunclova L."/>
            <person name="Horka H."/>
            <person name="Andersen J.F."/>
            <person name="Brynda J."/>
            <person name="Horn M."/>
            <person name="Nunn M.A."/>
            <person name="Kopacek P."/>
            <person name="Kopecky J."/>
            <person name="Mares M."/>
        </authorList>
    </citation>
    <scope>X-RAY CRYSTALLOGRAPHY (2.45 ANGSTROMS) OF 20-128</scope>
    <scope>FUNCTION</scope>
    <scope>IDENTIFICATION BY MASS SPECTROMETRY</scope>
    <scope>DISULFIDE BONDS</scope>
    <scope>RECOMBINANT EXPRESSION</scope>
    <scope>SUBCELLULAR LOCATION</scope>
    <scope>TISSUE SPECIFICITY</scope>
    <source>
        <tissue>Saliva</tissue>
    </source>
</reference>
<feature type="signal peptide" evidence="1">
    <location>
        <begin position="1"/>
        <end position="19"/>
    </location>
</feature>
<feature type="chain" id="PRO_5011018037" description="Cystatin-2">
    <location>
        <begin position="20"/>
        <end position="128"/>
    </location>
</feature>
<feature type="domain" description="Cystatin" evidence="1">
    <location>
        <begin position="29"/>
        <end position="116"/>
    </location>
</feature>
<feature type="disulfide bond" evidence="3 9">
    <location>
        <begin position="84"/>
        <end position="96"/>
    </location>
</feature>
<feature type="disulfide bond" evidence="3 9">
    <location>
        <begin position="107"/>
        <end position="127"/>
    </location>
</feature>
<feature type="sequence conflict" description="In Ref. 2; JAW02559." evidence="6" ref="2">
    <original>ATS</original>
    <variation>VTC</variation>
    <location>
        <begin position="43"/>
        <end position="45"/>
    </location>
</feature>
<feature type="strand" evidence="10">
    <location>
        <begin position="27"/>
        <end position="29"/>
    </location>
</feature>
<feature type="helix" evidence="10">
    <location>
        <begin position="34"/>
        <end position="44"/>
    </location>
</feature>
<feature type="strand" evidence="10">
    <location>
        <begin position="52"/>
        <end position="86"/>
    </location>
</feature>
<feature type="turn" evidence="10">
    <location>
        <begin position="93"/>
        <end position="95"/>
    </location>
</feature>
<feature type="strand" evidence="10">
    <location>
        <begin position="105"/>
        <end position="114"/>
    </location>
</feature>
<feature type="helix" evidence="10">
    <location>
        <begin position="115"/>
        <end position="117"/>
    </location>
</feature>
<feature type="strand" evidence="10">
    <location>
        <begin position="119"/>
        <end position="128"/>
    </location>
</feature>
<keyword id="KW-0002">3D-structure</keyword>
<keyword id="KW-1015">Disulfide bond</keyword>
<keyword id="KW-0646">Protease inhibitor</keyword>
<keyword id="KW-0964">Secreted</keyword>
<keyword id="KW-0732">Signal</keyword>
<keyword id="KW-0789">Thiol protease inhibitor</keyword>
<comment type="function">
    <text evidence="2 3">Inhibitor of cysteine proteinases with broad specificity for mammalian cathepsins, including endopeptidases (cathepsins L and S) and exopeptidases (cathepsins B, C and H) (PubMed:17132111, PubMed:20545626). Also inhibits endogenous cathepsin B-like and cathepsin C-like proteinases (PubMed:17132111). Does not inhibit human legumain (PubMed:20545626). May mimic specific host-derived cystatin(s) to interfere with its/their function in controlling cathepsin-mediated proteolysis (PubMed:20545626). Affects the function of antigen-presenting mouse dendritic cells by reducing the production of the pro-inflammatory cytokines TNF and interleukin-12, and proliferation of antigen-specific CD4+ T-cells, suggesting it may suppress the host adaptive immune response (PubMed:20545626). It is noteworthy that immunization of mice with this protein reduces O.moubata survival in infestation experiments (PubMed:20545626).</text>
</comment>
<comment type="subcellular location">
    <subcellularLocation>
        <location evidence="3">Secreted</location>
    </subcellularLocation>
</comment>
<comment type="tissue specificity">
    <text evidence="2 3">Widely expressed. Detected in salivary glands (at protein level), gut (at protein level), ovaries, and Malpighian tubules.</text>
</comment>
<comment type="induction">
    <text evidence="2">Down-regulated by a blood meal.</text>
</comment>
<comment type="similarity">
    <text evidence="6">Belongs to the cystatin family.</text>
</comment>
<sequence length="128" mass="14159">MSSFKVAVLLIAVYGASQGTSIPGGWTRQDPTEARFLELAHFATSSQTEGREFYDTVVTVKEVETQVVAGMNYKLTIEISPSVCKIGEVQYSAEQCVPKDAQQKSTCVAVIYHVPWQNQKSVTSYRCE</sequence>
<accession>Q6QD55</accession>
<accession>A0A1Z5L5D2</accession>
<proteinExistence type="evidence at protein level"/>
<organism>
    <name type="scientific">Ornithodoros moubata</name>
    <name type="common">Soft tick</name>
    <name type="synonym">Argasid tick</name>
    <dbReference type="NCBI Taxonomy" id="6938"/>
    <lineage>
        <taxon>Eukaryota</taxon>
        <taxon>Metazoa</taxon>
        <taxon>Ecdysozoa</taxon>
        <taxon>Arthropoda</taxon>
        <taxon>Chelicerata</taxon>
        <taxon>Arachnida</taxon>
        <taxon>Acari</taxon>
        <taxon>Parasitiformes</taxon>
        <taxon>Ixodida</taxon>
        <taxon>Ixodoidea</taxon>
        <taxon>Argasidae</taxon>
        <taxon>Ornithodorinae</taxon>
        <taxon>Ornithodoros</taxon>
    </lineage>
</organism>